<gene>
    <name type="primary">SH</name>
</gene>
<evidence type="ECO:0000250" key="1">
    <source>
        <dbReference type="UniProtKB" id="P22110"/>
    </source>
</evidence>
<evidence type="ECO:0000250" key="2">
    <source>
        <dbReference type="UniProtKB" id="P22112"/>
    </source>
</evidence>
<evidence type="ECO:0000255" key="3"/>
<evidence type="ECO:0000305" key="4"/>
<name>SH_MUMP6</name>
<proteinExistence type="inferred from homology"/>
<accession>P69188</accession>
<accession>P28084</accession>
<dbReference type="EMBL" id="X63712">
    <property type="protein sequence ID" value="CAA45245.1"/>
    <property type="molecule type" value="Genomic_RNA"/>
</dbReference>
<dbReference type="PIR" id="S19868">
    <property type="entry name" value="SHNZE2"/>
</dbReference>
<dbReference type="SMR" id="P69188"/>
<dbReference type="GO" id="GO:0020002">
    <property type="term" value="C:host cell plasma membrane"/>
    <property type="evidence" value="ECO:0007669"/>
    <property type="project" value="UniProtKB-SubCell"/>
</dbReference>
<dbReference type="GO" id="GO:0016020">
    <property type="term" value="C:membrane"/>
    <property type="evidence" value="ECO:0007669"/>
    <property type="project" value="UniProtKB-KW"/>
</dbReference>
<dbReference type="GO" id="GO:0055036">
    <property type="term" value="C:virion membrane"/>
    <property type="evidence" value="ECO:0007669"/>
    <property type="project" value="UniProtKB-SubCell"/>
</dbReference>
<dbReference type="GO" id="GO:0085034">
    <property type="term" value="P:symbiont-mediated suppression of host NF-kappaB cascade"/>
    <property type="evidence" value="ECO:0007669"/>
    <property type="project" value="UniProtKB-KW"/>
</dbReference>
<dbReference type="InterPro" id="IPR001477">
    <property type="entry name" value="SH"/>
</dbReference>
<dbReference type="Pfam" id="PF01445">
    <property type="entry name" value="SH"/>
    <property type="match status" value="1"/>
</dbReference>
<dbReference type="PIRSF" id="PIRSF003923">
    <property type="entry name" value="SH"/>
    <property type="match status" value="1"/>
</dbReference>
<feature type="chain" id="PRO_0000142876" description="Small hydrophobic protein">
    <location>
        <begin position="1"/>
        <end position="57"/>
    </location>
</feature>
<feature type="topological domain" description="Virion surface" evidence="3">
    <location>
        <begin position="1"/>
        <end position="8"/>
    </location>
</feature>
<feature type="transmembrane region" description="Helical" evidence="3">
    <location>
        <begin position="9"/>
        <end position="29"/>
    </location>
</feature>
<feature type="topological domain" description="Intravirion" evidence="3">
    <location>
        <begin position="30"/>
        <end position="57"/>
    </location>
</feature>
<reference key="1">
    <citation type="journal article" date="1993" name="Arch. Virol.">
        <title>Identification of a new mumps virus lineage by nucleotide sequence analysis of the SH gene of ten different strains.</title>
        <authorList>
            <person name="Yeo R.P."/>
            <person name="Afzal M.A."/>
            <person name="Forsey T."/>
            <person name="Rima B.K."/>
        </authorList>
    </citation>
    <scope>NUCLEOTIDE SEQUENCE [GENOMIC RNA]</scope>
</reference>
<protein>
    <recommendedName>
        <fullName>Small hydrophobic protein</fullName>
    </recommendedName>
</protein>
<organismHost>
    <name type="scientific">Homo sapiens</name>
    <name type="common">Human</name>
    <dbReference type="NCBI Taxonomy" id="9606"/>
</organismHost>
<sequence length="57" mass="6894">MPLIQPPLYLTFLLLMLLYRIITLYVWSLSTITYKTSVRHASLYQRSFFRWSVDHSL</sequence>
<comment type="function">
    <text evidence="2">Plays a role in the inhibition of the host NF-kappa-B pathway. This inhibition occurs at the receptor level, by preventing the signaling of TNFR1 as well as IL-1R and TLR3.</text>
</comment>
<comment type="subunit">
    <text evidence="1 2">Interacts with host TNFRSF1A, RIPK1 and IRAK1; these interactions interfere with host NF-kappa-B activation at the level of receptor complexes (By similarity). Interacts with host protein UBQLN4 (By similarity).</text>
</comment>
<comment type="subcellular location">
    <subcellularLocation>
        <location evidence="2">Virion membrane</location>
        <topology evidence="2">Single-pass membrane protein</topology>
    </subcellularLocation>
    <subcellularLocation>
        <location evidence="2">Host cell membrane</location>
        <topology evidence="2">Single-pass membrane protein</topology>
    </subcellularLocation>
</comment>
<comment type="similarity">
    <text evidence="4">Belongs to the rubulavirus small hydrophobic protein family.</text>
</comment>
<keyword id="KW-1032">Host cell membrane</keyword>
<keyword id="KW-1043">Host membrane</keyword>
<keyword id="KW-0945">Host-virus interaction</keyword>
<keyword id="KW-1100">Inhibition of host NF-kappa-B by virus</keyword>
<keyword id="KW-0472">Membrane</keyword>
<keyword id="KW-0812">Transmembrane</keyword>
<keyword id="KW-1133">Transmembrane helix</keyword>
<keyword id="KW-0946">Virion</keyword>
<organism>
    <name type="scientific">Mumps virus (strain Edingburgh 6)</name>
    <name type="common">MuV</name>
    <dbReference type="NCBI Taxonomy" id="11164"/>
    <lineage>
        <taxon>Viruses</taxon>
        <taxon>Riboviria</taxon>
        <taxon>Orthornavirae</taxon>
        <taxon>Negarnaviricota</taxon>
        <taxon>Haploviricotina</taxon>
        <taxon>Monjiviricetes</taxon>
        <taxon>Mononegavirales</taxon>
        <taxon>Paramyxoviridae</taxon>
        <taxon>Rubulavirinae</taxon>
        <taxon>Orthorubulavirus</taxon>
        <taxon>Orthorubulavirus parotitidis</taxon>
        <taxon>Mumps orthorubulavirus</taxon>
    </lineage>
</organism>